<dbReference type="EMBL" id="AE017340">
    <property type="protein sequence ID" value="AAV81505.1"/>
    <property type="molecule type" value="Genomic_DNA"/>
</dbReference>
<dbReference type="RefSeq" id="WP_011233917.1">
    <property type="nucleotide sequence ID" value="NC_006512.1"/>
</dbReference>
<dbReference type="SMR" id="Q5R0A9"/>
<dbReference type="STRING" id="283942.IL0664"/>
<dbReference type="GeneID" id="41335819"/>
<dbReference type="KEGG" id="ilo:IL0664"/>
<dbReference type="eggNOG" id="COG0239">
    <property type="taxonomic scope" value="Bacteria"/>
</dbReference>
<dbReference type="HOGENOM" id="CLU_114342_2_3_6"/>
<dbReference type="OrthoDB" id="9806299at2"/>
<dbReference type="Proteomes" id="UP000001171">
    <property type="component" value="Chromosome"/>
</dbReference>
<dbReference type="GO" id="GO:0005886">
    <property type="term" value="C:plasma membrane"/>
    <property type="evidence" value="ECO:0007669"/>
    <property type="project" value="UniProtKB-SubCell"/>
</dbReference>
<dbReference type="GO" id="GO:0062054">
    <property type="term" value="F:fluoride channel activity"/>
    <property type="evidence" value="ECO:0007669"/>
    <property type="project" value="UniProtKB-UniRule"/>
</dbReference>
<dbReference type="GO" id="GO:0046872">
    <property type="term" value="F:metal ion binding"/>
    <property type="evidence" value="ECO:0007669"/>
    <property type="project" value="UniProtKB-KW"/>
</dbReference>
<dbReference type="GO" id="GO:0140114">
    <property type="term" value="P:cellular detoxification of fluoride"/>
    <property type="evidence" value="ECO:0007669"/>
    <property type="project" value="UniProtKB-UniRule"/>
</dbReference>
<dbReference type="HAMAP" id="MF_00454">
    <property type="entry name" value="FluC"/>
    <property type="match status" value="1"/>
</dbReference>
<dbReference type="InterPro" id="IPR003691">
    <property type="entry name" value="FluC"/>
</dbReference>
<dbReference type="NCBIfam" id="TIGR00494">
    <property type="entry name" value="crcB"/>
    <property type="match status" value="1"/>
</dbReference>
<dbReference type="PANTHER" id="PTHR28259">
    <property type="entry name" value="FLUORIDE EXPORT PROTEIN 1-RELATED"/>
    <property type="match status" value="1"/>
</dbReference>
<dbReference type="PANTHER" id="PTHR28259:SF1">
    <property type="entry name" value="FLUORIDE EXPORT PROTEIN 1-RELATED"/>
    <property type="match status" value="1"/>
</dbReference>
<dbReference type="Pfam" id="PF02537">
    <property type="entry name" value="CRCB"/>
    <property type="match status" value="1"/>
</dbReference>
<reference key="1">
    <citation type="journal article" date="2004" name="Proc. Natl. Acad. Sci. U.S.A.">
        <title>Genome sequence of the deep-sea gamma-proteobacterium Idiomarina loihiensis reveals amino acid fermentation as a source of carbon and energy.</title>
        <authorList>
            <person name="Hou S."/>
            <person name="Saw J.H."/>
            <person name="Lee K.S."/>
            <person name="Freitas T.A."/>
            <person name="Belisle C."/>
            <person name="Kawarabayasi Y."/>
            <person name="Donachie S.P."/>
            <person name="Pikina A."/>
            <person name="Galperin M.Y."/>
            <person name="Koonin E.V."/>
            <person name="Makarova K.S."/>
            <person name="Omelchenko M.V."/>
            <person name="Sorokin A."/>
            <person name="Wolf Y.I."/>
            <person name="Li Q.X."/>
            <person name="Keum Y.S."/>
            <person name="Campbell S."/>
            <person name="Denery J."/>
            <person name="Aizawa S."/>
            <person name="Shibata S."/>
            <person name="Malahoff A."/>
            <person name="Alam M."/>
        </authorList>
    </citation>
    <scope>NUCLEOTIDE SEQUENCE [LARGE SCALE GENOMIC DNA]</scope>
    <source>
        <strain>ATCC BAA-735 / DSM 15497 / L2-TR</strain>
    </source>
</reference>
<evidence type="ECO:0000255" key="1">
    <source>
        <dbReference type="HAMAP-Rule" id="MF_00454"/>
    </source>
</evidence>
<organism>
    <name type="scientific">Idiomarina loihiensis (strain ATCC BAA-735 / DSM 15497 / L2-TR)</name>
    <dbReference type="NCBI Taxonomy" id="283942"/>
    <lineage>
        <taxon>Bacteria</taxon>
        <taxon>Pseudomonadati</taxon>
        <taxon>Pseudomonadota</taxon>
        <taxon>Gammaproteobacteria</taxon>
        <taxon>Alteromonadales</taxon>
        <taxon>Idiomarinaceae</taxon>
        <taxon>Idiomarina</taxon>
    </lineage>
</organism>
<protein>
    <recommendedName>
        <fullName evidence="1">Fluoride-specific ion channel FluC</fullName>
    </recommendedName>
</protein>
<proteinExistence type="inferred from homology"/>
<keyword id="KW-0997">Cell inner membrane</keyword>
<keyword id="KW-1003">Cell membrane</keyword>
<keyword id="KW-0407">Ion channel</keyword>
<keyword id="KW-0406">Ion transport</keyword>
<keyword id="KW-0472">Membrane</keyword>
<keyword id="KW-0479">Metal-binding</keyword>
<keyword id="KW-1185">Reference proteome</keyword>
<keyword id="KW-0915">Sodium</keyword>
<keyword id="KW-0812">Transmembrane</keyword>
<keyword id="KW-1133">Transmembrane helix</keyword>
<keyword id="KW-0813">Transport</keyword>
<sequence>MNNLLLHFFCVAVGGAIGASARFAMVLAMQSFGVRAFPFATLTVNIIGSFFLGLLLAYAEQQPVSETTRLFLGVGLLGAFTTFSTFSVEVVALASQGELLKAALHIAFNVIICIAAVFAAMMLYSTTVK</sequence>
<accession>Q5R0A9</accession>
<gene>
    <name evidence="1" type="primary">fluC</name>
    <name evidence="1" type="synonym">crcB</name>
    <name type="ordered locus">IL0664</name>
</gene>
<comment type="function">
    <text evidence="1">Fluoride-specific ion channel. Important for reducing fluoride concentration in the cell, thus reducing its toxicity.</text>
</comment>
<comment type="catalytic activity">
    <reaction evidence="1">
        <text>fluoride(in) = fluoride(out)</text>
        <dbReference type="Rhea" id="RHEA:76159"/>
        <dbReference type="ChEBI" id="CHEBI:17051"/>
    </reaction>
    <physiologicalReaction direction="left-to-right" evidence="1">
        <dbReference type="Rhea" id="RHEA:76160"/>
    </physiologicalReaction>
</comment>
<comment type="activity regulation">
    <text evidence="1">Na(+) is not transported, but it plays an essential structural role and its presence is essential for fluoride channel function.</text>
</comment>
<comment type="subcellular location">
    <subcellularLocation>
        <location evidence="1">Cell inner membrane</location>
        <topology evidence="1">Multi-pass membrane protein</topology>
    </subcellularLocation>
</comment>
<comment type="similarity">
    <text evidence="1">Belongs to the fluoride channel Fluc/FEX (TC 1.A.43) family.</text>
</comment>
<name>FLUC_IDILO</name>
<feature type="chain" id="PRO_0000110111" description="Fluoride-specific ion channel FluC">
    <location>
        <begin position="1"/>
        <end position="129"/>
    </location>
</feature>
<feature type="transmembrane region" description="Helical" evidence="1">
    <location>
        <begin position="8"/>
        <end position="28"/>
    </location>
</feature>
<feature type="transmembrane region" description="Helical" evidence="1">
    <location>
        <begin position="36"/>
        <end position="56"/>
    </location>
</feature>
<feature type="transmembrane region" description="Helical" evidence="1">
    <location>
        <begin position="71"/>
        <end position="91"/>
    </location>
</feature>
<feature type="transmembrane region" description="Helical" evidence="1">
    <location>
        <begin position="103"/>
        <end position="123"/>
    </location>
</feature>
<feature type="binding site" evidence="1">
    <location>
        <position position="78"/>
    </location>
    <ligand>
        <name>Na(+)</name>
        <dbReference type="ChEBI" id="CHEBI:29101"/>
        <note>structural</note>
    </ligand>
</feature>
<feature type="binding site" evidence="1">
    <location>
        <position position="81"/>
    </location>
    <ligand>
        <name>Na(+)</name>
        <dbReference type="ChEBI" id="CHEBI:29101"/>
        <note>structural</note>
    </ligand>
</feature>